<sequence>MADSKEIKRVLLSPLFDNNPIALQILGVCSALAVTTKLETALVMTLAVTLVTAFSSFFISLIRNHIPNSVRIIVQMVIIASLVIVVDQVLRAYAYEISKQLSVFVGLIITNCIVMGRAEAYAMKSPPIESFMDGIGNGLGYGVILVLVGFVRELVGSGKLFGVTVLETVQNGGWYLPNGLFLLAPSAFFIIGLLIWGLRTLKPAQIEKE</sequence>
<accession>Q8ZBZ3</accession>
<accession>Q0WC49</accession>
<organism>
    <name type="scientific">Yersinia pestis</name>
    <dbReference type="NCBI Taxonomy" id="632"/>
    <lineage>
        <taxon>Bacteria</taxon>
        <taxon>Pseudomonadati</taxon>
        <taxon>Pseudomonadota</taxon>
        <taxon>Gammaproteobacteria</taxon>
        <taxon>Enterobacterales</taxon>
        <taxon>Yersiniaceae</taxon>
        <taxon>Yersinia</taxon>
    </lineage>
</organism>
<feature type="chain" id="PRO_0000214246" description="Na(+)-translocating NADH-quinone reductase subunit D">
    <location>
        <begin position="1"/>
        <end position="209"/>
    </location>
</feature>
<feature type="transmembrane region" description="Helical" evidence="1">
    <location>
        <begin position="42"/>
        <end position="62"/>
    </location>
</feature>
<feature type="transmembrane region" description="Helical" evidence="1">
    <location>
        <begin position="66"/>
        <end position="86"/>
    </location>
</feature>
<feature type="transmembrane region" description="Helical" evidence="1">
    <location>
        <begin position="103"/>
        <end position="123"/>
    </location>
</feature>
<feature type="transmembrane region" description="Helical" evidence="1">
    <location>
        <begin position="131"/>
        <end position="151"/>
    </location>
</feature>
<feature type="transmembrane region" description="Helical" evidence="1">
    <location>
        <begin position="178"/>
        <end position="198"/>
    </location>
</feature>
<gene>
    <name evidence="1" type="primary">nqrD</name>
    <name type="ordered locus">YPO3237</name>
    <name type="ordered locus">y0954</name>
    <name type="ordered locus">YP_0696</name>
</gene>
<reference key="1">
    <citation type="journal article" date="2001" name="Nature">
        <title>Genome sequence of Yersinia pestis, the causative agent of plague.</title>
        <authorList>
            <person name="Parkhill J."/>
            <person name="Wren B.W."/>
            <person name="Thomson N.R."/>
            <person name="Titball R.W."/>
            <person name="Holden M.T.G."/>
            <person name="Prentice M.B."/>
            <person name="Sebaihia M."/>
            <person name="James K.D."/>
            <person name="Churcher C.M."/>
            <person name="Mungall K.L."/>
            <person name="Baker S."/>
            <person name="Basham D."/>
            <person name="Bentley S.D."/>
            <person name="Brooks K."/>
            <person name="Cerdeno-Tarraga A.-M."/>
            <person name="Chillingworth T."/>
            <person name="Cronin A."/>
            <person name="Davies R.M."/>
            <person name="Davis P."/>
            <person name="Dougan G."/>
            <person name="Feltwell T."/>
            <person name="Hamlin N."/>
            <person name="Holroyd S."/>
            <person name="Jagels K."/>
            <person name="Karlyshev A.V."/>
            <person name="Leather S."/>
            <person name="Moule S."/>
            <person name="Oyston P.C.F."/>
            <person name="Quail M.A."/>
            <person name="Rutherford K.M."/>
            <person name="Simmonds M."/>
            <person name="Skelton J."/>
            <person name="Stevens K."/>
            <person name="Whitehead S."/>
            <person name="Barrell B.G."/>
        </authorList>
    </citation>
    <scope>NUCLEOTIDE SEQUENCE [LARGE SCALE GENOMIC DNA]</scope>
    <source>
        <strain>CO-92 / Biovar Orientalis</strain>
    </source>
</reference>
<reference key="2">
    <citation type="journal article" date="2002" name="J. Bacteriol.">
        <title>Genome sequence of Yersinia pestis KIM.</title>
        <authorList>
            <person name="Deng W."/>
            <person name="Burland V."/>
            <person name="Plunkett G. III"/>
            <person name="Boutin A."/>
            <person name="Mayhew G.F."/>
            <person name="Liss P."/>
            <person name="Perna N.T."/>
            <person name="Rose D.J."/>
            <person name="Mau B."/>
            <person name="Zhou S."/>
            <person name="Schwartz D.C."/>
            <person name="Fetherston J.D."/>
            <person name="Lindler L.E."/>
            <person name="Brubaker R.R."/>
            <person name="Plano G.V."/>
            <person name="Straley S.C."/>
            <person name="McDonough K.A."/>
            <person name="Nilles M.L."/>
            <person name="Matson J.S."/>
            <person name="Blattner F.R."/>
            <person name="Perry R.D."/>
        </authorList>
    </citation>
    <scope>NUCLEOTIDE SEQUENCE [LARGE SCALE GENOMIC DNA]</scope>
    <source>
        <strain>KIM10+ / Biovar Mediaevalis</strain>
    </source>
</reference>
<reference key="3">
    <citation type="journal article" date="2004" name="DNA Res.">
        <title>Complete genome sequence of Yersinia pestis strain 91001, an isolate avirulent to humans.</title>
        <authorList>
            <person name="Song Y."/>
            <person name="Tong Z."/>
            <person name="Wang J."/>
            <person name="Wang L."/>
            <person name="Guo Z."/>
            <person name="Han Y."/>
            <person name="Zhang J."/>
            <person name="Pei D."/>
            <person name="Zhou D."/>
            <person name="Qin H."/>
            <person name="Pang X."/>
            <person name="Han Y."/>
            <person name="Zhai J."/>
            <person name="Li M."/>
            <person name="Cui B."/>
            <person name="Qi Z."/>
            <person name="Jin L."/>
            <person name="Dai R."/>
            <person name="Chen F."/>
            <person name="Li S."/>
            <person name="Ye C."/>
            <person name="Du Z."/>
            <person name="Lin W."/>
            <person name="Wang J."/>
            <person name="Yu J."/>
            <person name="Yang H."/>
            <person name="Wang J."/>
            <person name="Huang P."/>
            <person name="Yang R."/>
        </authorList>
    </citation>
    <scope>NUCLEOTIDE SEQUENCE [LARGE SCALE GENOMIC DNA]</scope>
    <source>
        <strain>91001 / Biovar Mediaevalis</strain>
    </source>
</reference>
<evidence type="ECO:0000255" key="1">
    <source>
        <dbReference type="HAMAP-Rule" id="MF_00428"/>
    </source>
</evidence>
<keyword id="KW-0997">Cell inner membrane</keyword>
<keyword id="KW-1003">Cell membrane</keyword>
<keyword id="KW-0406">Ion transport</keyword>
<keyword id="KW-0472">Membrane</keyword>
<keyword id="KW-0520">NAD</keyword>
<keyword id="KW-1185">Reference proteome</keyword>
<keyword id="KW-0915">Sodium</keyword>
<keyword id="KW-0739">Sodium transport</keyword>
<keyword id="KW-1278">Translocase</keyword>
<keyword id="KW-0812">Transmembrane</keyword>
<keyword id="KW-1133">Transmembrane helix</keyword>
<keyword id="KW-0813">Transport</keyword>
<keyword id="KW-0830">Ubiquinone</keyword>
<proteinExistence type="inferred from homology"/>
<comment type="function">
    <text evidence="1">NQR complex catalyzes the reduction of ubiquinone-1 to ubiquinol by two successive reactions, coupled with the transport of Na(+) ions from the cytoplasm to the periplasm. NqrA to NqrE are probably involved in the second step, the conversion of ubisemiquinone to ubiquinol.</text>
</comment>
<comment type="catalytic activity">
    <reaction evidence="1">
        <text>a ubiquinone + n Na(+)(in) + NADH + H(+) = a ubiquinol + n Na(+)(out) + NAD(+)</text>
        <dbReference type="Rhea" id="RHEA:47748"/>
        <dbReference type="Rhea" id="RHEA-COMP:9565"/>
        <dbReference type="Rhea" id="RHEA-COMP:9566"/>
        <dbReference type="ChEBI" id="CHEBI:15378"/>
        <dbReference type="ChEBI" id="CHEBI:16389"/>
        <dbReference type="ChEBI" id="CHEBI:17976"/>
        <dbReference type="ChEBI" id="CHEBI:29101"/>
        <dbReference type="ChEBI" id="CHEBI:57540"/>
        <dbReference type="ChEBI" id="CHEBI:57945"/>
        <dbReference type="EC" id="7.2.1.1"/>
    </reaction>
</comment>
<comment type="subunit">
    <text evidence="1">Composed of six subunits; NqrA, NqrB, NqrC, NqrD, NqrE and NqrF.</text>
</comment>
<comment type="subcellular location">
    <subcellularLocation>
        <location evidence="1">Cell inner membrane</location>
        <topology evidence="1">Multi-pass membrane protein</topology>
    </subcellularLocation>
</comment>
<comment type="similarity">
    <text evidence="1">Belongs to the NqrDE/RnfAE family.</text>
</comment>
<dbReference type="EC" id="7.2.1.1" evidence="1"/>
<dbReference type="EMBL" id="AL590842">
    <property type="protein sequence ID" value="CAL21831.1"/>
    <property type="molecule type" value="Genomic_DNA"/>
</dbReference>
<dbReference type="EMBL" id="AE009952">
    <property type="protein sequence ID" value="AAM84535.1"/>
    <property type="molecule type" value="Genomic_DNA"/>
</dbReference>
<dbReference type="EMBL" id="AE017042">
    <property type="protein sequence ID" value="AAS60962.1"/>
    <property type="molecule type" value="Genomic_DNA"/>
</dbReference>
<dbReference type="PIR" id="AD0393">
    <property type="entry name" value="AD0393"/>
</dbReference>
<dbReference type="RefSeq" id="WP_002208714.1">
    <property type="nucleotide sequence ID" value="NZ_WUCM01000034.1"/>
</dbReference>
<dbReference type="RefSeq" id="YP_002348139.1">
    <property type="nucleotide sequence ID" value="NC_003143.1"/>
</dbReference>
<dbReference type="SMR" id="Q8ZBZ3"/>
<dbReference type="STRING" id="214092.YPO3237"/>
<dbReference type="PaxDb" id="214092-YPO3237"/>
<dbReference type="DNASU" id="1145901"/>
<dbReference type="EnsemblBacteria" id="AAS60962">
    <property type="protein sequence ID" value="AAS60962"/>
    <property type="gene ID" value="YP_0696"/>
</dbReference>
<dbReference type="KEGG" id="ype:YPO3237"/>
<dbReference type="KEGG" id="ypk:y0954"/>
<dbReference type="KEGG" id="ypm:YP_0696"/>
<dbReference type="PATRIC" id="fig|214092.21.peg.3697"/>
<dbReference type="eggNOG" id="COG1347">
    <property type="taxonomic scope" value="Bacteria"/>
</dbReference>
<dbReference type="HOGENOM" id="CLU_046659_1_1_6"/>
<dbReference type="OMA" id="CIIMGRF"/>
<dbReference type="OrthoDB" id="9782945at2"/>
<dbReference type="Proteomes" id="UP000000815">
    <property type="component" value="Chromosome"/>
</dbReference>
<dbReference type="Proteomes" id="UP000001019">
    <property type="component" value="Chromosome"/>
</dbReference>
<dbReference type="Proteomes" id="UP000002490">
    <property type="component" value="Chromosome"/>
</dbReference>
<dbReference type="GO" id="GO:0005886">
    <property type="term" value="C:plasma membrane"/>
    <property type="evidence" value="ECO:0000318"/>
    <property type="project" value="GO_Central"/>
</dbReference>
<dbReference type="GO" id="GO:0016655">
    <property type="term" value="F:oxidoreductase activity, acting on NAD(P)H, quinone or similar compound as acceptor"/>
    <property type="evidence" value="ECO:0007669"/>
    <property type="project" value="UniProtKB-UniRule"/>
</dbReference>
<dbReference type="GO" id="GO:0006814">
    <property type="term" value="P:sodium ion transport"/>
    <property type="evidence" value="ECO:0007669"/>
    <property type="project" value="UniProtKB-UniRule"/>
</dbReference>
<dbReference type="HAMAP" id="MF_00428">
    <property type="entry name" value="NqrD"/>
    <property type="match status" value="1"/>
</dbReference>
<dbReference type="InterPro" id="IPR011292">
    <property type="entry name" value="NqrD"/>
</dbReference>
<dbReference type="InterPro" id="IPR003667">
    <property type="entry name" value="NqrDE/RnfAE"/>
</dbReference>
<dbReference type="NCBIfam" id="TIGR01939">
    <property type="entry name" value="nqrD"/>
    <property type="match status" value="1"/>
</dbReference>
<dbReference type="NCBIfam" id="NF006777">
    <property type="entry name" value="PRK09292.1"/>
    <property type="match status" value="1"/>
</dbReference>
<dbReference type="NCBIfam" id="NF009070">
    <property type="entry name" value="PRK12405.1"/>
    <property type="match status" value="1"/>
</dbReference>
<dbReference type="PANTHER" id="PTHR30586">
    <property type="entry name" value="ELECTRON TRANSPORT COMPLEX PROTEIN RNFE"/>
    <property type="match status" value="1"/>
</dbReference>
<dbReference type="PANTHER" id="PTHR30586:SF1">
    <property type="entry name" value="NA(+)-TRANSLOCATING NADH-QUINONE REDUCTASE SUBUNIT D"/>
    <property type="match status" value="1"/>
</dbReference>
<dbReference type="Pfam" id="PF02508">
    <property type="entry name" value="Rnf-Nqr"/>
    <property type="match status" value="1"/>
</dbReference>
<dbReference type="PIRSF" id="PIRSF006102">
    <property type="entry name" value="NQR_DE"/>
    <property type="match status" value="1"/>
</dbReference>
<protein>
    <recommendedName>
        <fullName evidence="1">Na(+)-translocating NADH-quinone reductase subunit D</fullName>
        <shortName evidence="1">Na(+)-NQR subunit D</shortName>
        <shortName evidence="1">Na(+)-translocating NQR subunit D</shortName>
        <ecNumber evidence="1">7.2.1.1</ecNumber>
    </recommendedName>
    <alternativeName>
        <fullName evidence="1">NQR complex subunit D</fullName>
    </alternativeName>
    <alternativeName>
        <fullName evidence="1">NQR-1 subunit D</fullName>
    </alternativeName>
</protein>
<name>NQRD_YERPE</name>